<comment type="function">
    <text>Putative cyclic nucleotide-gated ion channel.</text>
</comment>
<comment type="subunit">
    <text evidence="4">Homotetramer or heterotetramer.</text>
</comment>
<comment type="subcellular location">
    <subcellularLocation>
        <location evidence="4">Cell membrane</location>
        <topology evidence="4">Multi-pass membrane protein</topology>
    </subcellularLocation>
</comment>
<comment type="domain">
    <text evidence="1">The binding of calmodulin to the C-terminus might interfere with cyclic nucleotide binding and thus channel activation.</text>
</comment>
<comment type="similarity">
    <text evidence="4">Belongs to the cyclic nucleotide-gated cation channel (TC 1.A.1.5) family.</text>
</comment>
<sequence>MYKSQYISGQREKFVRLDDIDSSSSPATGMMMQRNCFGFNLKNRGGEKKKASKSFREGVKKIRSEGLITIGKSVTRAVFPEDLRITEKKIFDPQDKTLLVWNRLFVISCILAVSVDPLFFYLPIVDNSGSSCIGIDTKLAVTTTTLRTIVDVFYLTRMALQFRTAYIAPSSRVFGRGELVIDPAKIAERYLTRYFVVDFLAVLPLPQIAVWKFLHGSKGSDVLPTKTALLNIVIVQYIPRFVRFIPLTSELKKTAGAFAEGAWAGAAYYLLWYMLASHITGAFWYMLSVERNDTCWRFACKVQPDPRLCVQILYCGTKFVSSGETEWIKTVPELLKSNCSAKADDSKFNYGIYGQAISSGIVSSTTFFSKFCYCLWWGLQNLSTLGQGLQTSTFPGEVLFSIAIAIAGLLLFALLIGNMQTYLQSLTVRLEEMRIKRRDSEQWMHHRSLPQNLRERVRRYDQYKWLETRGVDEENIVQSLPKDLRRDIKRHLCLNLVRRVPLFANMDERLLDAICERLKPSLFTESTYIVREGDPVNEMMFIIRGRLESVTTDGGRSGFFNRGLLKEGDFCGEELLTWALDPKAGSNLPSSTRTVKALTEVEAFALEAEELKFVASQFRRLHSRQVQQTFRFYSQQWRTWASCFIQAAWRRYSRRKNAELRRIEEKEEELGYEDEYDDESDKRPMVITRSESSSRLRSTIFASRFAANALKGHRLRSSESSKTLINLQKPPEPDFDAE</sequence>
<keyword id="KW-0112">Calmodulin-binding</keyword>
<keyword id="KW-0114">cAMP</keyword>
<keyword id="KW-0116">cAMP-binding</keyword>
<keyword id="KW-1003">Cell membrane</keyword>
<keyword id="KW-0140">cGMP</keyword>
<keyword id="KW-0142">cGMP-binding</keyword>
<keyword id="KW-0407">Ion channel</keyword>
<keyword id="KW-0406">Ion transport</keyword>
<keyword id="KW-1071">Ligand-gated ion channel</keyword>
<keyword id="KW-0472">Membrane</keyword>
<keyword id="KW-0547">Nucleotide-binding</keyword>
<keyword id="KW-1185">Reference proteome</keyword>
<keyword id="KW-0812">Transmembrane</keyword>
<keyword id="KW-1133">Transmembrane helix</keyword>
<keyword id="KW-0813">Transport</keyword>
<name>CNGC7_ARATH</name>
<evidence type="ECO:0000250" key="1"/>
<evidence type="ECO:0000255" key="2"/>
<evidence type="ECO:0000256" key="3">
    <source>
        <dbReference type="SAM" id="MobiDB-lite"/>
    </source>
</evidence>
<evidence type="ECO:0000305" key="4"/>
<protein>
    <recommendedName>
        <fullName>Putative cyclic nucleotide-gated ion channel 7</fullName>
    </recommendedName>
    <alternativeName>
        <fullName>Cyclic nucleotide- and calmodulin-regulated ion channel 7</fullName>
    </alternativeName>
</protein>
<organism>
    <name type="scientific">Arabidopsis thaliana</name>
    <name type="common">Mouse-ear cress</name>
    <dbReference type="NCBI Taxonomy" id="3702"/>
    <lineage>
        <taxon>Eukaryota</taxon>
        <taxon>Viridiplantae</taxon>
        <taxon>Streptophyta</taxon>
        <taxon>Embryophyta</taxon>
        <taxon>Tracheophyta</taxon>
        <taxon>Spermatophyta</taxon>
        <taxon>Magnoliopsida</taxon>
        <taxon>eudicotyledons</taxon>
        <taxon>Gunneridae</taxon>
        <taxon>Pentapetalae</taxon>
        <taxon>rosids</taxon>
        <taxon>malvids</taxon>
        <taxon>Brassicales</taxon>
        <taxon>Brassicaceae</taxon>
        <taxon>Camelineae</taxon>
        <taxon>Arabidopsis</taxon>
    </lineage>
</organism>
<feature type="chain" id="PRO_0000219335" description="Putative cyclic nucleotide-gated ion channel 7">
    <location>
        <begin position="1"/>
        <end position="738"/>
    </location>
</feature>
<feature type="topological domain" description="Cytoplasmic" evidence="2">
    <location>
        <begin position="1"/>
        <end position="104"/>
    </location>
</feature>
<feature type="transmembrane region" description="Helical; Name=H1" evidence="2">
    <location>
        <begin position="105"/>
        <end position="125"/>
    </location>
</feature>
<feature type="topological domain" description="Extracellular" evidence="2">
    <location>
        <begin position="126"/>
        <end position="139"/>
    </location>
</feature>
<feature type="transmembrane region" description="Helical; Name=H2" evidence="2">
    <location>
        <begin position="140"/>
        <end position="160"/>
    </location>
</feature>
<feature type="topological domain" description="Cytoplasmic" evidence="2">
    <location>
        <begin position="161"/>
        <end position="193"/>
    </location>
</feature>
<feature type="transmembrane region" description="Helical; Name=H3" evidence="2">
    <location>
        <begin position="194"/>
        <end position="214"/>
    </location>
</feature>
<feature type="topological domain" description="Extracellular" evidence="2">
    <location>
        <begin position="215"/>
        <end position="227"/>
    </location>
</feature>
<feature type="transmembrane region" description="Helical; Name=H4" evidence="2">
    <location>
        <begin position="228"/>
        <end position="248"/>
    </location>
</feature>
<feature type="topological domain" description="Cytoplasmic" evidence="2">
    <location>
        <begin position="249"/>
        <end position="268"/>
    </location>
</feature>
<feature type="transmembrane region" description="Helical; Name=H5" evidence="2">
    <location>
        <begin position="269"/>
        <end position="289"/>
    </location>
</feature>
<feature type="topological domain" description="Extracellular" evidence="2">
    <location>
        <begin position="290"/>
        <end position="395"/>
    </location>
</feature>
<feature type="transmembrane region" description="Helical; Name=H6" evidence="2">
    <location>
        <begin position="396"/>
        <end position="416"/>
    </location>
</feature>
<feature type="topological domain" description="Cytoplasmic" evidence="2">
    <location>
        <begin position="417"/>
        <end position="738"/>
    </location>
</feature>
<feature type="domain" description="IQ">
    <location>
        <begin position="638"/>
        <end position="667"/>
    </location>
</feature>
<feature type="region of interest" description="Calmodulin-binding" evidence="1">
    <location>
        <begin position="618"/>
        <end position="633"/>
    </location>
</feature>
<feature type="region of interest" description="Disordered" evidence="3">
    <location>
        <begin position="671"/>
        <end position="693"/>
    </location>
</feature>
<feature type="region of interest" description="Disordered" evidence="3">
    <location>
        <begin position="715"/>
        <end position="738"/>
    </location>
</feature>
<feature type="binding site">
    <location>
        <begin position="502"/>
        <end position="632"/>
    </location>
    <ligand>
        <name>a nucleoside 3',5'-cyclic phosphate</name>
        <dbReference type="ChEBI" id="CHEBI:58464"/>
    </ligand>
</feature>
<feature type="binding site" evidence="1">
    <location>
        <position position="573"/>
    </location>
    <ligand>
        <name>a nucleoside 3',5'-cyclic phosphate</name>
        <dbReference type="ChEBI" id="CHEBI:58464"/>
    </ligand>
</feature>
<proteinExistence type="inferred from homology"/>
<dbReference type="EMBL" id="AC010924">
    <property type="protein sequence ID" value="AAF18496.1"/>
    <property type="molecule type" value="Genomic_DNA"/>
</dbReference>
<dbReference type="EMBL" id="CP002684">
    <property type="protein sequence ID" value="AEE29393.2"/>
    <property type="molecule type" value="Genomic_DNA"/>
</dbReference>
<dbReference type="PIR" id="E86294">
    <property type="entry name" value="E86294"/>
</dbReference>
<dbReference type="RefSeq" id="NP_001319014.1">
    <property type="nucleotide sequence ID" value="NM_001332197.1"/>
</dbReference>
<dbReference type="SMR" id="Q9S9N5"/>
<dbReference type="FunCoup" id="Q9S9N5">
    <property type="interactions" value="202"/>
</dbReference>
<dbReference type="STRING" id="3702.Q9S9N5"/>
<dbReference type="iPTMnet" id="Q9S9N5"/>
<dbReference type="PaxDb" id="3702-AT1G15990.1"/>
<dbReference type="ProteomicsDB" id="220394"/>
<dbReference type="EnsemblPlants" id="AT1G15990.1">
    <property type="protein sequence ID" value="AT1G15990.1"/>
    <property type="gene ID" value="AT1G15990"/>
</dbReference>
<dbReference type="GeneID" id="838169"/>
<dbReference type="Gramene" id="AT1G15990.1">
    <property type="protein sequence ID" value="AT1G15990.1"/>
    <property type="gene ID" value="AT1G15990"/>
</dbReference>
<dbReference type="KEGG" id="ath:AT1G15990"/>
<dbReference type="Araport" id="AT1G15990"/>
<dbReference type="TAIR" id="AT1G15990">
    <property type="gene designation" value="CNGC7"/>
</dbReference>
<dbReference type="eggNOG" id="KOG0498">
    <property type="taxonomic scope" value="Eukaryota"/>
</dbReference>
<dbReference type="HOGENOM" id="CLU_013069_3_0_1"/>
<dbReference type="InParanoid" id="Q9S9N5"/>
<dbReference type="OMA" id="IVVYYSW"/>
<dbReference type="PhylomeDB" id="Q9S9N5"/>
<dbReference type="PRO" id="PR:Q9S9N5"/>
<dbReference type="Proteomes" id="UP000006548">
    <property type="component" value="Chromosome 1"/>
</dbReference>
<dbReference type="ExpressionAtlas" id="Q9S9N5">
    <property type="expression patterns" value="baseline and differential"/>
</dbReference>
<dbReference type="GO" id="GO:0005886">
    <property type="term" value="C:plasma membrane"/>
    <property type="evidence" value="ECO:0000314"/>
    <property type="project" value="TAIR"/>
</dbReference>
<dbReference type="GO" id="GO:0090406">
    <property type="term" value="C:pollen tube"/>
    <property type="evidence" value="ECO:0000314"/>
    <property type="project" value="TAIR"/>
</dbReference>
<dbReference type="GO" id="GO:0005516">
    <property type="term" value="F:calmodulin binding"/>
    <property type="evidence" value="ECO:0007669"/>
    <property type="project" value="UniProtKB-KW"/>
</dbReference>
<dbReference type="GO" id="GO:0030552">
    <property type="term" value="F:cAMP binding"/>
    <property type="evidence" value="ECO:0007669"/>
    <property type="project" value="UniProtKB-KW"/>
</dbReference>
<dbReference type="GO" id="GO:0030553">
    <property type="term" value="F:cGMP binding"/>
    <property type="evidence" value="ECO:0007669"/>
    <property type="project" value="UniProtKB-KW"/>
</dbReference>
<dbReference type="GO" id="GO:0005249">
    <property type="term" value="F:voltage-gated potassium channel activity"/>
    <property type="evidence" value="ECO:0007669"/>
    <property type="project" value="InterPro"/>
</dbReference>
<dbReference type="GO" id="GO:0009860">
    <property type="term" value="P:pollen tube growth"/>
    <property type="evidence" value="ECO:0000316"/>
    <property type="project" value="TAIR"/>
</dbReference>
<dbReference type="CDD" id="cd00038">
    <property type="entry name" value="CAP_ED"/>
    <property type="match status" value="1"/>
</dbReference>
<dbReference type="FunFam" id="1.10.287.630:FF:000003">
    <property type="entry name" value="Cyclic nucleotide-gated ion channel 1"/>
    <property type="match status" value="1"/>
</dbReference>
<dbReference type="FunFam" id="2.60.120.10:FF:000024">
    <property type="entry name" value="Cyclic nucleotide-gated ion channel 1"/>
    <property type="match status" value="1"/>
</dbReference>
<dbReference type="Gene3D" id="1.10.287.70">
    <property type="match status" value="1"/>
</dbReference>
<dbReference type="Gene3D" id="1.10.287.630">
    <property type="entry name" value="Helix hairpin bin"/>
    <property type="match status" value="1"/>
</dbReference>
<dbReference type="Gene3D" id="2.60.120.10">
    <property type="entry name" value="Jelly Rolls"/>
    <property type="match status" value="1"/>
</dbReference>
<dbReference type="InterPro" id="IPR000595">
    <property type="entry name" value="cNMP-bd_dom"/>
</dbReference>
<dbReference type="InterPro" id="IPR018490">
    <property type="entry name" value="cNMP-bd_dom_sf"/>
</dbReference>
<dbReference type="InterPro" id="IPR005821">
    <property type="entry name" value="Ion_trans_dom"/>
</dbReference>
<dbReference type="InterPro" id="IPR003938">
    <property type="entry name" value="K_chnl_volt-dep_EAG/ELK/ERG"/>
</dbReference>
<dbReference type="InterPro" id="IPR014710">
    <property type="entry name" value="RmlC-like_jellyroll"/>
</dbReference>
<dbReference type="PANTHER" id="PTHR45651">
    <property type="entry name" value="CYCLIC NUCLEOTIDE-GATED ION CHANNEL 15-RELATED-RELATED"/>
    <property type="match status" value="1"/>
</dbReference>
<dbReference type="PANTHER" id="PTHR45651:SF115">
    <property type="entry name" value="CYCLIC NUCLEOTIDE-GATED ION CHANNEL 7-RELATED"/>
    <property type="match status" value="1"/>
</dbReference>
<dbReference type="Pfam" id="PF00027">
    <property type="entry name" value="cNMP_binding"/>
    <property type="match status" value="1"/>
</dbReference>
<dbReference type="Pfam" id="PF00520">
    <property type="entry name" value="Ion_trans"/>
    <property type="match status" value="1"/>
</dbReference>
<dbReference type="PRINTS" id="PR01463">
    <property type="entry name" value="EAGCHANLFMLY"/>
</dbReference>
<dbReference type="SMART" id="SM00100">
    <property type="entry name" value="cNMP"/>
    <property type="match status" value="1"/>
</dbReference>
<dbReference type="SUPFAM" id="SSF51206">
    <property type="entry name" value="cAMP-binding domain-like"/>
    <property type="match status" value="1"/>
</dbReference>
<dbReference type="SUPFAM" id="SSF81324">
    <property type="entry name" value="Voltage-gated potassium channels"/>
    <property type="match status" value="1"/>
</dbReference>
<dbReference type="PROSITE" id="PS50042">
    <property type="entry name" value="CNMP_BINDING_3"/>
    <property type="match status" value="1"/>
</dbReference>
<accession>Q9S9N5</accession>
<accession>F4I2R9</accession>
<reference key="1">
    <citation type="journal article" date="2000" name="Nature">
        <title>Sequence and analysis of chromosome 1 of the plant Arabidopsis thaliana.</title>
        <authorList>
            <person name="Theologis A."/>
            <person name="Ecker J.R."/>
            <person name="Palm C.J."/>
            <person name="Federspiel N.A."/>
            <person name="Kaul S."/>
            <person name="White O."/>
            <person name="Alonso J."/>
            <person name="Altafi H."/>
            <person name="Araujo R."/>
            <person name="Bowman C.L."/>
            <person name="Brooks S.Y."/>
            <person name="Buehler E."/>
            <person name="Chan A."/>
            <person name="Chao Q."/>
            <person name="Chen H."/>
            <person name="Cheuk R.F."/>
            <person name="Chin C.W."/>
            <person name="Chung M.K."/>
            <person name="Conn L."/>
            <person name="Conway A.B."/>
            <person name="Conway A.R."/>
            <person name="Creasy T.H."/>
            <person name="Dewar K."/>
            <person name="Dunn P."/>
            <person name="Etgu P."/>
            <person name="Feldblyum T.V."/>
            <person name="Feng J.-D."/>
            <person name="Fong B."/>
            <person name="Fujii C.Y."/>
            <person name="Gill J.E."/>
            <person name="Goldsmith A.D."/>
            <person name="Haas B."/>
            <person name="Hansen N.F."/>
            <person name="Hughes B."/>
            <person name="Huizar L."/>
            <person name="Hunter J.L."/>
            <person name="Jenkins J."/>
            <person name="Johnson-Hopson C."/>
            <person name="Khan S."/>
            <person name="Khaykin E."/>
            <person name="Kim C.J."/>
            <person name="Koo H.L."/>
            <person name="Kremenetskaia I."/>
            <person name="Kurtz D.B."/>
            <person name="Kwan A."/>
            <person name="Lam B."/>
            <person name="Langin-Hooper S."/>
            <person name="Lee A."/>
            <person name="Lee J.M."/>
            <person name="Lenz C.A."/>
            <person name="Li J.H."/>
            <person name="Li Y.-P."/>
            <person name="Lin X."/>
            <person name="Liu S.X."/>
            <person name="Liu Z.A."/>
            <person name="Luros J.S."/>
            <person name="Maiti R."/>
            <person name="Marziali A."/>
            <person name="Militscher J."/>
            <person name="Miranda M."/>
            <person name="Nguyen M."/>
            <person name="Nierman W.C."/>
            <person name="Osborne B.I."/>
            <person name="Pai G."/>
            <person name="Peterson J."/>
            <person name="Pham P.K."/>
            <person name="Rizzo M."/>
            <person name="Rooney T."/>
            <person name="Rowley D."/>
            <person name="Sakano H."/>
            <person name="Salzberg S.L."/>
            <person name="Schwartz J.R."/>
            <person name="Shinn P."/>
            <person name="Southwick A.M."/>
            <person name="Sun H."/>
            <person name="Tallon L.J."/>
            <person name="Tambunga G."/>
            <person name="Toriumi M.J."/>
            <person name="Town C.D."/>
            <person name="Utterback T."/>
            <person name="Van Aken S."/>
            <person name="Vaysberg M."/>
            <person name="Vysotskaia V.S."/>
            <person name="Walker M."/>
            <person name="Wu D."/>
            <person name="Yu G."/>
            <person name="Fraser C.M."/>
            <person name="Venter J.C."/>
            <person name="Davis R.W."/>
        </authorList>
    </citation>
    <scope>NUCLEOTIDE SEQUENCE [LARGE SCALE GENOMIC DNA]</scope>
    <source>
        <strain>cv. Columbia</strain>
    </source>
</reference>
<reference key="2">
    <citation type="journal article" date="2017" name="Plant J.">
        <title>Araport11: a complete reannotation of the Arabidopsis thaliana reference genome.</title>
        <authorList>
            <person name="Cheng C.Y."/>
            <person name="Krishnakumar V."/>
            <person name="Chan A.P."/>
            <person name="Thibaud-Nissen F."/>
            <person name="Schobel S."/>
            <person name="Town C.D."/>
        </authorList>
    </citation>
    <scope>GENOME REANNOTATION</scope>
    <source>
        <strain>cv. Columbia</strain>
    </source>
</reference>
<reference key="3">
    <citation type="journal article" date="2001" name="Plant Physiol.">
        <title>Phylogenetic relationships within cation transporter families of Arabidopsis.</title>
        <authorList>
            <person name="Maeser P."/>
            <person name="Thomine S."/>
            <person name="Schroeder J.I."/>
            <person name="Ward J.M."/>
            <person name="Hirschi K."/>
            <person name="Sze H."/>
            <person name="Talke I.N."/>
            <person name="Amtmann A."/>
            <person name="Maathuis F.J.M."/>
            <person name="Sanders D."/>
            <person name="Harper J.F."/>
            <person name="Tchieu J."/>
            <person name="Gribskov M."/>
            <person name="Persans M.W."/>
            <person name="Salt D.E."/>
            <person name="Kim S.A."/>
            <person name="Guerinot M.L."/>
        </authorList>
    </citation>
    <scope>GENE FAMILY</scope>
    <scope>NOMENCLATURE</scope>
</reference>
<gene>
    <name type="primary">CNGC7</name>
    <name type="ordered locus">At1g15990</name>
    <name type="ORF">T24D18.9</name>
</gene>